<proteinExistence type="inferred from homology"/>
<sequence>MAGQTLYDKLWNAHEVTKRDDGSSLIYIDRHLLHEVTSPQAFEGLELANRAPWRLSANIASPDHNVPTVTKERSEGVAGIKDKVSRLQVLTLDNNCAKFDIAEFTINDARQGILHVVGPEQGLVLPGMTVVCGDSHTATHGALGCLAHGIGTSEVEHVLATQCLIQKKSKNMQIRVTGELGVGVTSKDVVLAIIAKIGTAGGTGHAIEFAGQVFEDMSMEGRMTVCNMAIEAGARVGMVAVDDTTINYVKGRPYAPNESQWQQAEAYWRTFYSDDDAVFDSVVEIDGSQIAPQVSWGTSPEMVVDVTQSVPTLDQAIDEAQEEGWLRAYTYMGLEAGQKITDIQLDRIFIGSCTNSRIEDLRDAAAVIKGRKVADNIKEAIVVAGSGQVKLQAEAEGLDALFTDAGFEWREPGCSMCLAMNADKLEPQEHCASTSNRNFEGRQGNGGRTHLVSPAMAAAAALAGHFVDVRTF</sequence>
<name>LEUC_PSYA2</name>
<organism>
    <name type="scientific">Psychrobacter arcticus (strain DSM 17307 / VKM B-2377 / 273-4)</name>
    <dbReference type="NCBI Taxonomy" id="259536"/>
    <lineage>
        <taxon>Bacteria</taxon>
        <taxon>Pseudomonadati</taxon>
        <taxon>Pseudomonadota</taxon>
        <taxon>Gammaproteobacteria</taxon>
        <taxon>Moraxellales</taxon>
        <taxon>Moraxellaceae</taxon>
        <taxon>Psychrobacter</taxon>
    </lineage>
</organism>
<accession>Q4FRU7</accession>
<gene>
    <name evidence="1" type="primary">leuC</name>
    <name type="ordered locus">Psyc_1413</name>
</gene>
<reference key="1">
    <citation type="journal article" date="2010" name="Appl. Environ. Microbiol.">
        <title>The genome sequence of Psychrobacter arcticus 273-4, a psychroactive Siberian permafrost bacterium, reveals mechanisms for adaptation to low-temperature growth.</title>
        <authorList>
            <person name="Ayala-del-Rio H.L."/>
            <person name="Chain P.S."/>
            <person name="Grzymski J.J."/>
            <person name="Ponder M.A."/>
            <person name="Ivanova N."/>
            <person name="Bergholz P.W."/>
            <person name="Di Bartolo G."/>
            <person name="Hauser L."/>
            <person name="Land M."/>
            <person name="Bakermans C."/>
            <person name="Rodrigues D."/>
            <person name="Klappenbach J."/>
            <person name="Zarka D."/>
            <person name="Larimer F."/>
            <person name="Richardson P."/>
            <person name="Murray A."/>
            <person name="Thomashow M."/>
            <person name="Tiedje J.M."/>
        </authorList>
    </citation>
    <scope>NUCLEOTIDE SEQUENCE [LARGE SCALE GENOMIC DNA]</scope>
    <source>
        <strain>DSM 17307 / VKM B-2377 / 273-4</strain>
    </source>
</reference>
<protein>
    <recommendedName>
        <fullName evidence="1">3-isopropylmalate dehydratase large subunit</fullName>
        <ecNumber evidence="1">4.2.1.33</ecNumber>
    </recommendedName>
    <alternativeName>
        <fullName evidence="1">Alpha-IPM isomerase</fullName>
        <shortName evidence="1">IPMI</shortName>
    </alternativeName>
    <alternativeName>
        <fullName evidence="1">Isopropylmalate isomerase</fullName>
    </alternativeName>
</protein>
<keyword id="KW-0004">4Fe-4S</keyword>
<keyword id="KW-0028">Amino-acid biosynthesis</keyword>
<keyword id="KW-0100">Branched-chain amino acid biosynthesis</keyword>
<keyword id="KW-0408">Iron</keyword>
<keyword id="KW-0411">Iron-sulfur</keyword>
<keyword id="KW-0432">Leucine biosynthesis</keyword>
<keyword id="KW-0456">Lyase</keyword>
<keyword id="KW-0479">Metal-binding</keyword>
<keyword id="KW-1185">Reference proteome</keyword>
<dbReference type="EC" id="4.2.1.33" evidence="1"/>
<dbReference type="EMBL" id="CP000082">
    <property type="protein sequence ID" value="AAZ19261.1"/>
    <property type="molecule type" value="Genomic_DNA"/>
</dbReference>
<dbReference type="RefSeq" id="WP_011280682.1">
    <property type="nucleotide sequence ID" value="NC_007204.1"/>
</dbReference>
<dbReference type="SMR" id="Q4FRU7"/>
<dbReference type="STRING" id="259536.Psyc_1413"/>
<dbReference type="KEGG" id="par:Psyc_1413"/>
<dbReference type="eggNOG" id="COG0065">
    <property type="taxonomic scope" value="Bacteria"/>
</dbReference>
<dbReference type="HOGENOM" id="CLU_006714_3_4_6"/>
<dbReference type="OrthoDB" id="9802769at2"/>
<dbReference type="UniPathway" id="UPA00048">
    <property type="reaction ID" value="UER00071"/>
</dbReference>
<dbReference type="Proteomes" id="UP000000546">
    <property type="component" value="Chromosome"/>
</dbReference>
<dbReference type="GO" id="GO:0003861">
    <property type="term" value="F:3-isopropylmalate dehydratase activity"/>
    <property type="evidence" value="ECO:0007669"/>
    <property type="project" value="UniProtKB-UniRule"/>
</dbReference>
<dbReference type="GO" id="GO:0051539">
    <property type="term" value="F:4 iron, 4 sulfur cluster binding"/>
    <property type="evidence" value="ECO:0007669"/>
    <property type="project" value="UniProtKB-KW"/>
</dbReference>
<dbReference type="GO" id="GO:0046872">
    <property type="term" value="F:metal ion binding"/>
    <property type="evidence" value="ECO:0007669"/>
    <property type="project" value="UniProtKB-KW"/>
</dbReference>
<dbReference type="GO" id="GO:0009098">
    <property type="term" value="P:L-leucine biosynthetic process"/>
    <property type="evidence" value="ECO:0007669"/>
    <property type="project" value="UniProtKB-UniRule"/>
</dbReference>
<dbReference type="CDD" id="cd01583">
    <property type="entry name" value="IPMI"/>
    <property type="match status" value="1"/>
</dbReference>
<dbReference type="FunFam" id="3.30.499.10:FF:000007">
    <property type="entry name" value="3-isopropylmalate dehydratase large subunit"/>
    <property type="match status" value="1"/>
</dbReference>
<dbReference type="Gene3D" id="3.30.499.10">
    <property type="entry name" value="Aconitase, domain 3"/>
    <property type="match status" value="2"/>
</dbReference>
<dbReference type="HAMAP" id="MF_01026">
    <property type="entry name" value="LeuC_type1"/>
    <property type="match status" value="1"/>
</dbReference>
<dbReference type="InterPro" id="IPR004430">
    <property type="entry name" value="3-IsopropMal_deHydase_lsu"/>
</dbReference>
<dbReference type="InterPro" id="IPR015931">
    <property type="entry name" value="Acnase/IPM_dHydase_lsu_aba_1/3"/>
</dbReference>
<dbReference type="InterPro" id="IPR001030">
    <property type="entry name" value="Acoase/IPM_deHydtase_lsu_aba"/>
</dbReference>
<dbReference type="InterPro" id="IPR018136">
    <property type="entry name" value="Aconitase_4Fe-4S_BS"/>
</dbReference>
<dbReference type="InterPro" id="IPR036008">
    <property type="entry name" value="Aconitase_4Fe-4S_dom"/>
</dbReference>
<dbReference type="InterPro" id="IPR050067">
    <property type="entry name" value="IPM_dehydratase_rel_enz"/>
</dbReference>
<dbReference type="InterPro" id="IPR033941">
    <property type="entry name" value="IPMI_cat"/>
</dbReference>
<dbReference type="NCBIfam" id="TIGR00170">
    <property type="entry name" value="leuC"/>
    <property type="match status" value="1"/>
</dbReference>
<dbReference type="NCBIfam" id="NF004016">
    <property type="entry name" value="PRK05478.1"/>
    <property type="match status" value="1"/>
</dbReference>
<dbReference type="NCBIfam" id="NF009116">
    <property type="entry name" value="PRK12466.1"/>
    <property type="match status" value="1"/>
</dbReference>
<dbReference type="PANTHER" id="PTHR43822:SF9">
    <property type="entry name" value="3-ISOPROPYLMALATE DEHYDRATASE"/>
    <property type="match status" value="1"/>
</dbReference>
<dbReference type="PANTHER" id="PTHR43822">
    <property type="entry name" value="HOMOACONITASE, MITOCHONDRIAL-RELATED"/>
    <property type="match status" value="1"/>
</dbReference>
<dbReference type="Pfam" id="PF00330">
    <property type="entry name" value="Aconitase"/>
    <property type="match status" value="1"/>
</dbReference>
<dbReference type="PRINTS" id="PR00415">
    <property type="entry name" value="ACONITASE"/>
</dbReference>
<dbReference type="SUPFAM" id="SSF53732">
    <property type="entry name" value="Aconitase iron-sulfur domain"/>
    <property type="match status" value="1"/>
</dbReference>
<dbReference type="PROSITE" id="PS00450">
    <property type="entry name" value="ACONITASE_1"/>
    <property type="match status" value="1"/>
</dbReference>
<dbReference type="PROSITE" id="PS01244">
    <property type="entry name" value="ACONITASE_2"/>
    <property type="match status" value="1"/>
</dbReference>
<feature type="chain" id="PRO_0000076790" description="3-isopropylmalate dehydratase large subunit">
    <location>
        <begin position="1"/>
        <end position="472"/>
    </location>
</feature>
<feature type="binding site" evidence="1">
    <location>
        <position position="353"/>
    </location>
    <ligand>
        <name>[4Fe-4S] cluster</name>
        <dbReference type="ChEBI" id="CHEBI:49883"/>
    </ligand>
</feature>
<feature type="binding site" evidence="1">
    <location>
        <position position="414"/>
    </location>
    <ligand>
        <name>[4Fe-4S] cluster</name>
        <dbReference type="ChEBI" id="CHEBI:49883"/>
    </ligand>
</feature>
<feature type="binding site" evidence="1">
    <location>
        <position position="417"/>
    </location>
    <ligand>
        <name>[4Fe-4S] cluster</name>
        <dbReference type="ChEBI" id="CHEBI:49883"/>
    </ligand>
</feature>
<comment type="function">
    <text evidence="1">Catalyzes the isomerization between 2-isopropylmalate and 3-isopropylmalate, via the formation of 2-isopropylmaleate.</text>
</comment>
<comment type="catalytic activity">
    <reaction evidence="1">
        <text>(2R,3S)-3-isopropylmalate = (2S)-2-isopropylmalate</text>
        <dbReference type="Rhea" id="RHEA:32287"/>
        <dbReference type="ChEBI" id="CHEBI:1178"/>
        <dbReference type="ChEBI" id="CHEBI:35121"/>
        <dbReference type="EC" id="4.2.1.33"/>
    </reaction>
</comment>
<comment type="cofactor">
    <cofactor evidence="1">
        <name>[4Fe-4S] cluster</name>
        <dbReference type="ChEBI" id="CHEBI:49883"/>
    </cofactor>
    <text evidence="1">Binds 1 [4Fe-4S] cluster per subunit.</text>
</comment>
<comment type="pathway">
    <text evidence="1">Amino-acid biosynthesis; L-leucine biosynthesis; L-leucine from 3-methyl-2-oxobutanoate: step 2/4.</text>
</comment>
<comment type="subunit">
    <text evidence="1">Heterodimer of LeuC and LeuD.</text>
</comment>
<comment type="similarity">
    <text evidence="1">Belongs to the aconitase/IPM isomerase family. LeuC type 1 subfamily.</text>
</comment>
<evidence type="ECO:0000255" key="1">
    <source>
        <dbReference type="HAMAP-Rule" id="MF_01026"/>
    </source>
</evidence>